<dbReference type="EC" id="1.3.1.89" evidence="1"/>
<dbReference type="EC" id="1.3.1.-" evidence="3"/>
<dbReference type="EMBL" id="CM001232">
    <property type="protein sequence ID" value="EHA54290.1"/>
    <property type="molecule type" value="Genomic_DNA"/>
</dbReference>
<dbReference type="RefSeq" id="XP_003714097.1">
    <property type="nucleotide sequence ID" value="XM_003714049.1"/>
</dbReference>
<dbReference type="SMR" id="A4RLF4"/>
<dbReference type="FunCoup" id="A4RLF4">
    <property type="interactions" value="884"/>
</dbReference>
<dbReference type="STRING" id="242507.A4RLF4"/>
<dbReference type="EnsemblFungi" id="MGG_01205T0">
    <property type="protein sequence ID" value="MGG_01205T0"/>
    <property type="gene ID" value="MGG_01205"/>
</dbReference>
<dbReference type="GeneID" id="2679761"/>
<dbReference type="KEGG" id="mgr:MGG_01205"/>
<dbReference type="VEuPathDB" id="FungiDB:MGG_01205"/>
<dbReference type="eggNOG" id="KOG2333">
    <property type="taxonomic scope" value="Eukaryota"/>
</dbReference>
<dbReference type="HOGENOM" id="CLU_013299_7_0_1"/>
<dbReference type="InParanoid" id="A4RLF4"/>
<dbReference type="OMA" id="WSYIAEC"/>
<dbReference type="OrthoDB" id="259935at2759"/>
<dbReference type="Proteomes" id="UP000009058">
    <property type="component" value="Chromosome 2"/>
</dbReference>
<dbReference type="GO" id="GO:0005737">
    <property type="term" value="C:cytoplasm"/>
    <property type="evidence" value="ECO:0007669"/>
    <property type="project" value="UniProtKB-SubCell"/>
</dbReference>
<dbReference type="GO" id="GO:0034399">
    <property type="term" value="C:nuclear periphery"/>
    <property type="evidence" value="ECO:0007669"/>
    <property type="project" value="EnsemblFungi"/>
</dbReference>
<dbReference type="GO" id="GO:0050660">
    <property type="term" value="F:flavin adenine dinucleotide binding"/>
    <property type="evidence" value="ECO:0007669"/>
    <property type="project" value="InterPro"/>
</dbReference>
<dbReference type="GO" id="GO:0106414">
    <property type="term" value="F:mRNA dihydrouridine synthase activity"/>
    <property type="evidence" value="ECO:0007669"/>
    <property type="project" value="RHEA"/>
</dbReference>
<dbReference type="GO" id="GO:0003723">
    <property type="term" value="F:RNA binding"/>
    <property type="evidence" value="ECO:0007669"/>
    <property type="project" value="TreeGrafter"/>
</dbReference>
<dbReference type="GO" id="GO:0102265">
    <property type="term" value="F:tRNA-dihydrouridine47 synthase activity"/>
    <property type="evidence" value="ECO:0007669"/>
    <property type="project" value="UniProtKB-EC"/>
</dbReference>
<dbReference type="GO" id="GO:0008270">
    <property type="term" value="F:zinc ion binding"/>
    <property type="evidence" value="ECO:0007669"/>
    <property type="project" value="UniProtKB-KW"/>
</dbReference>
<dbReference type="GO" id="GO:0006397">
    <property type="term" value="P:mRNA processing"/>
    <property type="evidence" value="ECO:0007669"/>
    <property type="project" value="UniProtKB-KW"/>
</dbReference>
<dbReference type="CDD" id="cd02801">
    <property type="entry name" value="DUS_like_FMN"/>
    <property type="match status" value="1"/>
</dbReference>
<dbReference type="FunFam" id="3.20.20.70:FF:000145">
    <property type="entry name" value="tRNA-dihydrouridine(47) synthase [NAD(P)(+)]"/>
    <property type="match status" value="1"/>
</dbReference>
<dbReference type="Gene3D" id="3.20.20.70">
    <property type="entry name" value="Aldolase class I"/>
    <property type="match status" value="1"/>
</dbReference>
<dbReference type="InterPro" id="IPR013785">
    <property type="entry name" value="Aldolase_TIM"/>
</dbReference>
<dbReference type="InterPro" id="IPR035587">
    <property type="entry name" value="DUS-like_FMN-bd"/>
</dbReference>
<dbReference type="InterPro" id="IPR018517">
    <property type="entry name" value="tRNA_hU_synthase_CS"/>
</dbReference>
<dbReference type="InterPro" id="IPR000571">
    <property type="entry name" value="Znf_CCCH"/>
</dbReference>
<dbReference type="PANTHER" id="PTHR45846">
    <property type="entry name" value="TRNA-DIHYDROURIDINE(47) SYNTHASE [NAD(P)(+)]-LIKE"/>
    <property type="match status" value="1"/>
</dbReference>
<dbReference type="PANTHER" id="PTHR45846:SF1">
    <property type="entry name" value="TRNA-DIHYDROURIDINE(47) SYNTHASE [NAD(P)(+)]-LIKE"/>
    <property type="match status" value="1"/>
</dbReference>
<dbReference type="Pfam" id="PF01207">
    <property type="entry name" value="Dus"/>
    <property type="match status" value="2"/>
</dbReference>
<dbReference type="SUPFAM" id="SSF51395">
    <property type="entry name" value="FMN-linked oxidoreductases"/>
    <property type="match status" value="1"/>
</dbReference>
<dbReference type="PROSITE" id="PS01136">
    <property type="entry name" value="UPF0034"/>
    <property type="match status" value="1"/>
</dbReference>
<dbReference type="PROSITE" id="PS50103">
    <property type="entry name" value="ZF_C3H1"/>
    <property type="match status" value="2"/>
</dbReference>
<feature type="chain" id="PRO_0000330242" description="tRNA-dihydrouridine(47) synthase [NAD(P)(+)]">
    <location>
        <begin position="1"/>
        <end position="739"/>
    </location>
</feature>
<feature type="zinc finger region" description="C3H1-type 1" evidence="4">
    <location>
        <begin position="137"/>
        <end position="170"/>
    </location>
</feature>
<feature type="zinc finger region" description="C3H1-type 2" evidence="4">
    <location>
        <begin position="187"/>
        <end position="212"/>
    </location>
</feature>
<feature type="region of interest" description="Disordered" evidence="5">
    <location>
        <begin position="1"/>
        <end position="77"/>
    </location>
</feature>
<feature type="region of interest" description="Disordered" evidence="5">
    <location>
        <begin position="92"/>
        <end position="133"/>
    </location>
</feature>
<feature type="compositionally biased region" description="Basic and acidic residues" evidence="5">
    <location>
        <begin position="32"/>
        <end position="51"/>
    </location>
</feature>
<feature type="active site" description="Proton donor" evidence="2">
    <location>
        <position position="442"/>
    </location>
</feature>
<feature type="binding site" evidence="2">
    <location>
        <begin position="330"/>
        <end position="332"/>
    </location>
    <ligand>
        <name>FMN</name>
        <dbReference type="ChEBI" id="CHEBI:58210"/>
    </ligand>
</feature>
<feature type="binding site" evidence="2">
    <location>
        <position position="410"/>
    </location>
    <ligand>
        <name>FMN</name>
        <dbReference type="ChEBI" id="CHEBI:58210"/>
    </ligand>
</feature>
<feature type="binding site" evidence="2">
    <location>
        <position position="482"/>
    </location>
    <ligand>
        <name>FMN</name>
        <dbReference type="ChEBI" id="CHEBI:58210"/>
    </ligand>
</feature>
<feature type="binding site" evidence="2">
    <location>
        <position position="523"/>
    </location>
    <ligand>
        <name>FMN</name>
        <dbReference type="ChEBI" id="CHEBI:58210"/>
    </ligand>
</feature>
<feature type="binding site" evidence="2">
    <location>
        <begin position="580"/>
        <end position="582"/>
    </location>
    <ligand>
        <name>FMN</name>
        <dbReference type="ChEBI" id="CHEBI:58210"/>
    </ligand>
</feature>
<feature type="binding site" evidence="2">
    <location>
        <begin position="604"/>
        <end position="605"/>
    </location>
    <ligand>
        <name>FMN</name>
        <dbReference type="ChEBI" id="CHEBI:58210"/>
    </ligand>
</feature>
<organism>
    <name type="scientific">Pyricularia oryzae (strain 70-15 / ATCC MYA-4617 / FGSC 8958)</name>
    <name type="common">Rice blast fungus</name>
    <name type="synonym">Magnaporthe oryzae</name>
    <dbReference type="NCBI Taxonomy" id="242507"/>
    <lineage>
        <taxon>Eukaryota</taxon>
        <taxon>Fungi</taxon>
        <taxon>Dikarya</taxon>
        <taxon>Ascomycota</taxon>
        <taxon>Pezizomycotina</taxon>
        <taxon>Sordariomycetes</taxon>
        <taxon>Sordariomycetidae</taxon>
        <taxon>Magnaporthales</taxon>
        <taxon>Pyriculariaceae</taxon>
        <taxon>Pyricularia</taxon>
    </lineage>
</organism>
<comment type="function">
    <text evidence="1 3">Catalyzes the synthesis of dihydrouridine, a modified base found in the D-loop of most tRNAs. Specifically modifies U47 in cytoplasmic tRNAs (By similarity). Catalyzes the synthesis of dihydrouridine in some mRNAs, thereby affecting their translation (By similarity).</text>
</comment>
<comment type="catalytic activity">
    <reaction evidence="1">
        <text>5,6-dihydrouridine(47) in tRNA + NAD(+) = uridine(47) in tRNA + NADH + H(+)</text>
        <dbReference type="Rhea" id="RHEA:53364"/>
        <dbReference type="Rhea" id="RHEA-COMP:13539"/>
        <dbReference type="Rhea" id="RHEA-COMP:13540"/>
        <dbReference type="ChEBI" id="CHEBI:15378"/>
        <dbReference type="ChEBI" id="CHEBI:57540"/>
        <dbReference type="ChEBI" id="CHEBI:57945"/>
        <dbReference type="ChEBI" id="CHEBI:65315"/>
        <dbReference type="ChEBI" id="CHEBI:74443"/>
        <dbReference type="EC" id="1.3.1.89"/>
    </reaction>
    <physiologicalReaction direction="right-to-left" evidence="1">
        <dbReference type="Rhea" id="RHEA:53366"/>
    </physiologicalReaction>
</comment>
<comment type="catalytic activity">
    <reaction evidence="1">
        <text>5,6-dihydrouridine(47) in tRNA + NADP(+) = uridine(47) in tRNA + NADPH + H(+)</text>
        <dbReference type="Rhea" id="RHEA:53360"/>
        <dbReference type="Rhea" id="RHEA-COMP:13539"/>
        <dbReference type="Rhea" id="RHEA-COMP:13540"/>
        <dbReference type="ChEBI" id="CHEBI:15378"/>
        <dbReference type="ChEBI" id="CHEBI:57783"/>
        <dbReference type="ChEBI" id="CHEBI:58349"/>
        <dbReference type="ChEBI" id="CHEBI:65315"/>
        <dbReference type="ChEBI" id="CHEBI:74443"/>
        <dbReference type="EC" id="1.3.1.89"/>
    </reaction>
    <physiologicalReaction direction="right-to-left" evidence="1">
        <dbReference type="Rhea" id="RHEA:53362"/>
    </physiologicalReaction>
</comment>
<comment type="catalytic activity">
    <reaction evidence="3">
        <text>a 5,6-dihydrouridine in mRNA + NAD(+) = a uridine in mRNA + NADH + H(+)</text>
        <dbReference type="Rhea" id="RHEA:69851"/>
        <dbReference type="Rhea" id="RHEA-COMP:14658"/>
        <dbReference type="Rhea" id="RHEA-COMP:17789"/>
        <dbReference type="ChEBI" id="CHEBI:15378"/>
        <dbReference type="ChEBI" id="CHEBI:57540"/>
        <dbReference type="ChEBI" id="CHEBI:57945"/>
        <dbReference type="ChEBI" id="CHEBI:65315"/>
        <dbReference type="ChEBI" id="CHEBI:74443"/>
    </reaction>
    <physiologicalReaction direction="right-to-left" evidence="3">
        <dbReference type="Rhea" id="RHEA:69853"/>
    </physiologicalReaction>
</comment>
<comment type="catalytic activity">
    <reaction evidence="3">
        <text>a 5,6-dihydrouridine in mRNA + NADP(+) = a uridine in mRNA + NADPH + H(+)</text>
        <dbReference type="Rhea" id="RHEA:69855"/>
        <dbReference type="Rhea" id="RHEA-COMP:14658"/>
        <dbReference type="Rhea" id="RHEA-COMP:17789"/>
        <dbReference type="ChEBI" id="CHEBI:15378"/>
        <dbReference type="ChEBI" id="CHEBI:57783"/>
        <dbReference type="ChEBI" id="CHEBI:58349"/>
        <dbReference type="ChEBI" id="CHEBI:65315"/>
        <dbReference type="ChEBI" id="CHEBI:74443"/>
    </reaction>
    <physiologicalReaction direction="right-to-left" evidence="3">
        <dbReference type="Rhea" id="RHEA:69857"/>
    </physiologicalReaction>
</comment>
<comment type="cofactor">
    <cofactor evidence="2">
        <name>FMN</name>
        <dbReference type="ChEBI" id="CHEBI:58210"/>
    </cofactor>
</comment>
<comment type="subcellular location">
    <subcellularLocation>
        <location evidence="1">Cytoplasm</location>
    </subcellularLocation>
    <subcellularLocation>
        <location evidence="1">Nucleus</location>
    </subcellularLocation>
</comment>
<comment type="similarity">
    <text evidence="6">Belongs to the Dus family. Dus3 subfamily.</text>
</comment>
<sequence length="739" mass="82693">MDPNATTPIPHPPELASTAEKRLIEAENGEPAAKRVRLDEDGGENARDSAVKGDAANGQEHITPAASEIKPDNRVKGQAPIKAEYLVEVIHNNGRDARDEGPDDDAAEGRTASEPSGKVARKGKKGQNQARDFGRSADSIRLCNSRMLSDEFSPKHCSFGDRCNLSHDLRKYLAEGRRPDLETFGGKCPIFEVHGWCNAGWKCLFVRSHMEEVEREDGRKELVLLRDLTRSKKPEGEASEDGPYGVVNTVASVDKHRMGRSKVDLSRSVEYSKWMDQYTNLVKQLHNARVDEKKREEELGELRATFVEPPFKPSEKRRLYFGRETPVLAPLTTQGNLPFRRLCVDLGAQGTYSEMAMAKPIVQGQQSEWALMKAHESETRPPTLSPETLASNSPIVKVYDNSRDLRFGAQISASSHPLAIKAAECLTTFLPHLRLIDLNCGCPIDMIYKAGAGSALLEQHNKIERIIRGMNAVSGEVPITCKLRIGVKENHPLAKKNIERAVFGSPDFRNQLGAPGCAAITLHGRTRQQRYKKPADWGYIAECAALIQSYRDKRDELTDTVREPDASTLAPSSEVFFLGNGDCYSHADYYKAIDESHVDTVMIGRGALIKPWVFEEIAAGQYLDKSSTERLGYIERFCRYGMEAWGADEMGIGTTRRFLLEYLSFAYRYVPIGLLERLPPAINDRPPAYRGRDDLETLMASDNYRDWIKISEMFLGPAHEGFKFQPKHKSNSYEMEAEG</sequence>
<name>DUS3_PYRO7</name>
<evidence type="ECO:0000250" key="1">
    <source>
        <dbReference type="UniProtKB" id="Q06053"/>
    </source>
</evidence>
<evidence type="ECO:0000250" key="2">
    <source>
        <dbReference type="UniProtKB" id="Q5SMC7"/>
    </source>
</evidence>
<evidence type="ECO:0000250" key="3">
    <source>
        <dbReference type="UniProtKB" id="Q9UTH9"/>
    </source>
</evidence>
<evidence type="ECO:0000255" key="4">
    <source>
        <dbReference type="PROSITE-ProRule" id="PRU00723"/>
    </source>
</evidence>
<evidence type="ECO:0000256" key="5">
    <source>
        <dbReference type="SAM" id="MobiDB-lite"/>
    </source>
</evidence>
<evidence type="ECO:0000305" key="6"/>
<reference key="1">
    <citation type="journal article" date="2005" name="Nature">
        <title>The genome sequence of the rice blast fungus Magnaporthe grisea.</title>
        <authorList>
            <person name="Dean R.A."/>
            <person name="Talbot N.J."/>
            <person name="Ebbole D.J."/>
            <person name="Farman M.L."/>
            <person name="Mitchell T.K."/>
            <person name="Orbach M.J."/>
            <person name="Thon M.R."/>
            <person name="Kulkarni R."/>
            <person name="Xu J.-R."/>
            <person name="Pan H."/>
            <person name="Read N.D."/>
            <person name="Lee Y.-H."/>
            <person name="Carbone I."/>
            <person name="Brown D."/>
            <person name="Oh Y.Y."/>
            <person name="Donofrio N."/>
            <person name="Jeong J.S."/>
            <person name="Soanes D.M."/>
            <person name="Djonovic S."/>
            <person name="Kolomiets E."/>
            <person name="Rehmeyer C."/>
            <person name="Li W."/>
            <person name="Harding M."/>
            <person name="Kim S."/>
            <person name="Lebrun M.-H."/>
            <person name="Bohnert H."/>
            <person name="Coughlan S."/>
            <person name="Butler J."/>
            <person name="Calvo S.E."/>
            <person name="Ma L.-J."/>
            <person name="Nicol R."/>
            <person name="Purcell S."/>
            <person name="Nusbaum C."/>
            <person name="Galagan J.E."/>
            <person name="Birren B.W."/>
        </authorList>
    </citation>
    <scope>NUCLEOTIDE SEQUENCE [LARGE SCALE GENOMIC DNA]</scope>
    <source>
        <strain>70-15 / ATCC MYA-4617 / FGSC 8958</strain>
    </source>
</reference>
<gene>
    <name type="primary">DUS3</name>
    <name type="ORF">MGG_01205</name>
</gene>
<accession>A4RLF4</accession>
<accession>G4MWZ8</accession>
<keyword id="KW-0963">Cytoplasm</keyword>
<keyword id="KW-0285">Flavoprotein</keyword>
<keyword id="KW-0288">FMN</keyword>
<keyword id="KW-0479">Metal-binding</keyword>
<keyword id="KW-0507">mRNA processing</keyword>
<keyword id="KW-0520">NAD</keyword>
<keyword id="KW-0521">NADP</keyword>
<keyword id="KW-0539">Nucleus</keyword>
<keyword id="KW-0560">Oxidoreductase</keyword>
<keyword id="KW-1185">Reference proteome</keyword>
<keyword id="KW-0677">Repeat</keyword>
<keyword id="KW-0819">tRNA processing</keyword>
<keyword id="KW-0862">Zinc</keyword>
<keyword id="KW-0863">Zinc-finger</keyword>
<protein>
    <recommendedName>
        <fullName>tRNA-dihydrouridine(47) synthase [NAD(P)(+)]</fullName>
        <ecNumber evidence="1">1.3.1.89</ecNumber>
    </recommendedName>
    <alternativeName>
        <fullName>mRNA-dihydrouridine synthase DUS3</fullName>
        <ecNumber evidence="3">1.3.1.-</ecNumber>
    </alternativeName>
    <alternativeName>
        <fullName>tRNA-dihydrouridine synthase 3</fullName>
    </alternativeName>
</protein>
<proteinExistence type="inferred from homology"/>